<comment type="function">
    <text evidence="1">Catalyzes the condensation of pantoate with beta-alanine in an ATP-dependent reaction via a pantoyl-adenylate intermediate.</text>
</comment>
<comment type="catalytic activity">
    <reaction evidence="1">
        <text>(R)-pantoate + beta-alanine + ATP = (R)-pantothenate + AMP + diphosphate + H(+)</text>
        <dbReference type="Rhea" id="RHEA:10912"/>
        <dbReference type="ChEBI" id="CHEBI:15378"/>
        <dbReference type="ChEBI" id="CHEBI:15980"/>
        <dbReference type="ChEBI" id="CHEBI:29032"/>
        <dbReference type="ChEBI" id="CHEBI:30616"/>
        <dbReference type="ChEBI" id="CHEBI:33019"/>
        <dbReference type="ChEBI" id="CHEBI:57966"/>
        <dbReference type="ChEBI" id="CHEBI:456215"/>
        <dbReference type="EC" id="6.3.2.1"/>
    </reaction>
</comment>
<comment type="pathway">
    <text evidence="1">Cofactor biosynthesis; (R)-pantothenate biosynthesis; (R)-pantothenate from (R)-pantoate and beta-alanine: step 1/1.</text>
</comment>
<comment type="subunit">
    <text evidence="1">Homodimer.</text>
</comment>
<comment type="subcellular location">
    <subcellularLocation>
        <location evidence="1">Cytoplasm</location>
    </subcellularLocation>
</comment>
<comment type="miscellaneous">
    <text evidence="1">The reaction proceeds by a bi uni uni bi ping pong mechanism.</text>
</comment>
<comment type="similarity">
    <text evidence="1">Belongs to the pantothenate synthetase family.</text>
</comment>
<keyword id="KW-0067">ATP-binding</keyword>
<keyword id="KW-0963">Cytoplasm</keyword>
<keyword id="KW-0436">Ligase</keyword>
<keyword id="KW-0547">Nucleotide-binding</keyword>
<keyword id="KW-0566">Pantothenate biosynthesis</keyword>
<keyword id="KW-1185">Reference proteome</keyword>
<gene>
    <name evidence="1" type="primary">panC</name>
    <name type="ordered locus">PMI0195</name>
</gene>
<protein>
    <recommendedName>
        <fullName evidence="1">Pantothenate synthetase</fullName>
        <shortName evidence="1">PS</shortName>
        <ecNumber evidence="1">6.3.2.1</ecNumber>
    </recommendedName>
    <alternativeName>
        <fullName evidence="1">Pantoate--beta-alanine ligase</fullName>
    </alternativeName>
    <alternativeName>
        <fullName evidence="1">Pantoate-activating enzyme</fullName>
    </alternativeName>
</protein>
<proteinExistence type="inferred from homology"/>
<evidence type="ECO:0000255" key="1">
    <source>
        <dbReference type="HAMAP-Rule" id="MF_00158"/>
    </source>
</evidence>
<sequence length="283" mass="31766">MLIIETTLILRREIKRLKQEGKRIALVPTMGNLHQGHLKLIEEARIHADVVIASIFVNPMQFDREADLANYPRTLQEDCELLRDKHVDIVFAPSAKEMYPNGMENQTIVEVPVLSSVLEGASRPGHFRGVTTVVSKLFNLVQPDVALFGEKDYQQLQIIKKMVSDLCFDISIIPVPIVRDKTGLAFSSRNRLLSDNEKQQAPVLYQAMQQIAEQLKSGNLDVNQLLQTAKATLEQQGFRADECFICDAQTLAPLSEESRCAVILMAAWLGNTRLIDSQQVSLV</sequence>
<organism>
    <name type="scientific">Proteus mirabilis (strain HI4320)</name>
    <dbReference type="NCBI Taxonomy" id="529507"/>
    <lineage>
        <taxon>Bacteria</taxon>
        <taxon>Pseudomonadati</taxon>
        <taxon>Pseudomonadota</taxon>
        <taxon>Gammaproteobacteria</taxon>
        <taxon>Enterobacterales</taxon>
        <taxon>Morganellaceae</taxon>
        <taxon>Proteus</taxon>
    </lineage>
</organism>
<dbReference type="EC" id="6.3.2.1" evidence="1"/>
<dbReference type="EMBL" id="AM942759">
    <property type="protein sequence ID" value="CAR40574.1"/>
    <property type="molecule type" value="Genomic_DNA"/>
</dbReference>
<dbReference type="RefSeq" id="WP_004245004.1">
    <property type="nucleotide sequence ID" value="NC_010554.1"/>
</dbReference>
<dbReference type="SMR" id="B4EUD2"/>
<dbReference type="EnsemblBacteria" id="CAR40574">
    <property type="protein sequence ID" value="CAR40574"/>
    <property type="gene ID" value="PMI0195"/>
</dbReference>
<dbReference type="GeneID" id="6803314"/>
<dbReference type="KEGG" id="pmr:PMI0195"/>
<dbReference type="eggNOG" id="COG0414">
    <property type="taxonomic scope" value="Bacteria"/>
</dbReference>
<dbReference type="HOGENOM" id="CLU_047148_0_0_6"/>
<dbReference type="UniPathway" id="UPA00028">
    <property type="reaction ID" value="UER00005"/>
</dbReference>
<dbReference type="Proteomes" id="UP000008319">
    <property type="component" value="Chromosome"/>
</dbReference>
<dbReference type="GO" id="GO:0005829">
    <property type="term" value="C:cytosol"/>
    <property type="evidence" value="ECO:0007669"/>
    <property type="project" value="TreeGrafter"/>
</dbReference>
<dbReference type="GO" id="GO:0005524">
    <property type="term" value="F:ATP binding"/>
    <property type="evidence" value="ECO:0007669"/>
    <property type="project" value="UniProtKB-KW"/>
</dbReference>
<dbReference type="GO" id="GO:0004592">
    <property type="term" value="F:pantoate-beta-alanine ligase activity"/>
    <property type="evidence" value="ECO:0007669"/>
    <property type="project" value="UniProtKB-UniRule"/>
</dbReference>
<dbReference type="GO" id="GO:0015940">
    <property type="term" value="P:pantothenate biosynthetic process"/>
    <property type="evidence" value="ECO:0007669"/>
    <property type="project" value="UniProtKB-UniRule"/>
</dbReference>
<dbReference type="CDD" id="cd00560">
    <property type="entry name" value="PanC"/>
    <property type="match status" value="1"/>
</dbReference>
<dbReference type="FunFam" id="3.30.1300.10:FF:000001">
    <property type="entry name" value="Pantothenate synthetase"/>
    <property type="match status" value="1"/>
</dbReference>
<dbReference type="FunFam" id="3.40.50.620:FF:000013">
    <property type="entry name" value="Pantothenate synthetase"/>
    <property type="match status" value="1"/>
</dbReference>
<dbReference type="Gene3D" id="3.40.50.620">
    <property type="entry name" value="HUPs"/>
    <property type="match status" value="1"/>
</dbReference>
<dbReference type="Gene3D" id="3.30.1300.10">
    <property type="entry name" value="Pantoate-beta-alanine ligase, C-terminal domain"/>
    <property type="match status" value="1"/>
</dbReference>
<dbReference type="HAMAP" id="MF_00158">
    <property type="entry name" value="PanC"/>
    <property type="match status" value="1"/>
</dbReference>
<dbReference type="InterPro" id="IPR004821">
    <property type="entry name" value="Cyt_trans-like"/>
</dbReference>
<dbReference type="InterPro" id="IPR003721">
    <property type="entry name" value="Pantoate_ligase"/>
</dbReference>
<dbReference type="InterPro" id="IPR042176">
    <property type="entry name" value="Pantoate_ligase_C"/>
</dbReference>
<dbReference type="InterPro" id="IPR014729">
    <property type="entry name" value="Rossmann-like_a/b/a_fold"/>
</dbReference>
<dbReference type="NCBIfam" id="TIGR00125">
    <property type="entry name" value="cyt_tran_rel"/>
    <property type="match status" value="1"/>
</dbReference>
<dbReference type="NCBIfam" id="TIGR00018">
    <property type="entry name" value="panC"/>
    <property type="match status" value="1"/>
</dbReference>
<dbReference type="PANTHER" id="PTHR21299">
    <property type="entry name" value="CYTIDYLATE KINASE/PANTOATE-BETA-ALANINE LIGASE"/>
    <property type="match status" value="1"/>
</dbReference>
<dbReference type="PANTHER" id="PTHR21299:SF1">
    <property type="entry name" value="PANTOATE--BETA-ALANINE LIGASE"/>
    <property type="match status" value="1"/>
</dbReference>
<dbReference type="Pfam" id="PF02569">
    <property type="entry name" value="Pantoate_ligase"/>
    <property type="match status" value="1"/>
</dbReference>
<dbReference type="SUPFAM" id="SSF52374">
    <property type="entry name" value="Nucleotidylyl transferase"/>
    <property type="match status" value="1"/>
</dbReference>
<feature type="chain" id="PRO_1000097089" description="Pantothenate synthetase">
    <location>
        <begin position="1"/>
        <end position="283"/>
    </location>
</feature>
<feature type="active site" description="Proton donor" evidence="1">
    <location>
        <position position="37"/>
    </location>
</feature>
<feature type="binding site" evidence="1">
    <location>
        <begin position="30"/>
        <end position="37"/>
    </location>
    <ligand>
        <name>ATP</name>
        <dbReference type="ChEBI" id="CHEBI:30616"/>
    </ligand>
</feature>
<feature type="binding site" evidence="1">
    <location>
        <position position="61"/>
    </location>
    <ligand>
        <name>(R)-pantoate</name>
        <dbReference type="ChEBI" id="CHEBI:15980"/>
    </ligand>
</feature>
<feature type="binding site" evidence="1">
    <location>
        <position position="61"/>
    </location>
    <ligand>
        <name>beta-alanine</name>
        <dbReference type="ChEBI" id="CHEBI:57966"/>
    </ligand>
</feature>
<feature type="binding site" evidence="1">
    <location>
        <begin position="149"/>
        <end position="152"/>
    </location>
    <ligand>
        <name>ATP</name>
        <dbReference type="ChEBI" id="CHEBI:30616"/>
    </ligand>
</feature>
<feature type="binding site" evidence="1">
    <location>
        <position position="155"/>
    </location>
    <ligand>
        <name>(R)-pantoate</name>
        <dbReference type="ChEBI" id="CHEBI:15980"/>
    </ligand>
</feature>
<feature type="binding site" evidence="1">
    <location>
        <position position="178"/>
    </location>
    <ligand>
        <name>ATP</name>
        <dbReference type="ChEBI" id="CHEBI:30616"/>
    </ligand>
</feature>
<feature type="binding site" evidence="1">
    <location>
        <begin position="186"/>
        <end position="189"/>
    </location>
    <ligand>
        <name>ATP</name>
        <dbReference type="ChEBI" id="CHEBI:30616"/>
    </ligand>
</feature>
<name>PANC_PROMH</name>
<reference key="1">
    <citation type="journal article" date="2008" name="J. Bacteriol.">
        <title>Complete genome sequence of uropathogenic Proteus mirabilis, a master of both adherence and motility.</title>
        <authorList>
            <person name="Pearson M.M."/>
            <person name="Sebaihia M."/>
            <person name="Churcher C."/>
            <person name="Quail M.A."/>
            <person name="Seshasayee A.S."/>
            <person name="Luscombe N.M."/>
            <person name="Abdellah Z."/>
            <person name="Arrosmith C."/>
            <person name="Atkin B."/>
            <person name="Chillingworth T."/>
            <person name="Hauser H."/>
            <person name="Jagels K."/>
            <person name="Moule S."/>
            <person name="Mungall K."/>
            <person name="Norbertczak H."/>
            <person name="Rabbinowitsch E."/>
            <person name="Walker D."/>
            <person name="Whithead S."/>
            <person name="Thomson N.R."/>
            <person name="Rather P.N."/>
            <person name="Parkhill J."/>
            <person name="Mobley H.L.T."/>
        </authorList>
    </citation>
    <scope>NUCLEOTIDE SEQUENCE [LARGE SCALE GENOMIC DNA]</scope>
    <source>
        <strain>HI4320</strain>
    </source>
</reference>
<accession>B4EUD2</accession>